<name>UPPP_ROSDO</name>
<gene>
    <name evidence="1" type="primary">uppP</name>
    <name type="ordered locus">RD1_0064</name>
</gene>
<evidence type="ECO:0000255" key="1">
    <source>
        <dbReference type="HAMAP-Rule" id="MF_01006"/>
    </source>
</evidence>
<dbReference type="EC" id="3.6.1.27" evidence="1"/>
<dbReference type="EMBL" id="CP000362">
    <property type="protein sequence ID" value="ABG29801.1"/>
    <property type="molecule type" value="Genomic_DNA"/>
</dbReference>
<dbReference type="RefSeq" id="WP_011566423.1">
    <property type="nucleotide sequence ID" value="NC_008209.1"/>
</dbReference>
<dbReference type="SMR" id="Q16DZ2"/>
<dbReference type="STRING" id="375451.RD1_0064"/>
<dbReference type="KEGG" id="rde:RD1_0064"/>
<dbReference type="eggNOG" id="COG1968">
    <property type="taxonomic scope" value="Bacteria"/>
</dbReference>
<dbReference type="HOGENOM" id="CLU_060296_1_0_5"/>
<dbReference type="OrthoDB" id="9808289at2"/>
<dbReference type="Proteomes" id="UP000007029">
    <property type="component" value="Chromosome"/>
</dbReference>
<dbReference type="GO" id="GO:0005886">
    <property type="term" value="C:plasma membrane"/>
    <property type="evidence" value="ECO:0007669"/>
    <property type="project" value="UniProtKB-SubCell"/>
</dbReference>
<dbReference type="GO" id="GO:0050380">
    <property type="term" value="F:undecaprenyl-diphosphatase activity"/>
    <property type="evidence" value="ECO:0007669"/>
    <property type="project" value="UniProtKB-UniRule"/>
</dbReference>
<dbReference type="GO" id="GO:0071555">
    <property type="term" value="P:cell wall organization"/>
    <property type="evidence" value="ECO:0007669"/>
    <property type="project" value="UniProtKB-KW"/>
</dbReference>
<dbReference type="GO" id="GO:0009252">
    <property type="term" value="P:peptidoglycan biosynthetic process"/>
    <property type="evidence" value="ECO:0007669"/>
    <property type="project" value="UniProtKB-KW"/>
</dbReference>
<dbReference type="GO" id="GO:0008360">
    <property type="term" value="P:regulation of cell shape"/>
    <property type="evidence" value="ECO:0007669"/>
    <property type="project" value="UniProtKB-KW"/>
</dbReference>
<dbReference type="GO" id="GO:0046677">
    <property type="term" value="P:response to antibiotic"/>
    <property type="evidence" value="ECO:0007669"/>
    <property type="project" value="UniProtKB-UniRule"/>
</dbReference>
<dbReference type="HAMAP" id="MF_01006">
    <property type="entry name" value="Undec_diphosphatase"/>
    <property type="match status" value="1"/>
</dbReference>
<dbReference type="InterPro" id="IPR003824">
    <property type="entry name" value="UppP"/>
</dbReference>
<dbReference type="NCBIfam" id="NF001393">
    <property type="entry name" value="PRK00281.2-4"/>
    <property type="match status" value="1"/>
</dbReference>
<dbReference type="PANTHER" id="PTHR30622">
    <property type="entry name" value="UNDECAPRENYL-DIPHOSPHATASE"/>
    <property type="match status" value="1"/>
</dbReference>
<dbReference type="PANTHER" id="PTHR30622:SF4">
    <property type="entry name" value="UNDECAPRENYL-DIPHOSPHATASE"/>
    <property type="match status" value="1"/>
</dbReference>
<dbReference type="Pfam" id="PF02673">
    <property type="entry name" value="BacA"/>
    <property type="match status" value="1"/>
</dbReference>
<protein>
    <recommendedName>
        <fullName evidence="1">Undecaprenyl-diphosphatase</fullName>
        <ecNumber evidence="1">3.6.1.27</ecNumber>
    </recommendedName>
    <alternativeName>
        <fullName evidence="1">Bacitracin resistance protein</fullName>
    </alternativeName>
    <alternativeName>
        <fullName evidence="1">Undecaprenyl pyrophosphate phosphatase</fullName>
    </alternativeName>
</protein>
<keyword id="KW-0046">Antibiotic resistance</keyword>
<keyword id="KW-0997">Cell inner membrane</keyword>
<keyword id="KW-1003">Cell membrane</keyword>
<keyword id="KW-0133">Cell shape</keyword>
<keyword id="KW-0961">Cell wall biogenesis/degradation</keyword>
<keyword id="KW-0378">Hydrolase</keyword>
<keyword id="KW-0472">Membrane</keyword>
<keyword id="KW-0573">Peptidoglycan synthesis</keyword>
<keyword id="KW-1185">Reference proteome</keyword>
<keyword id="KW-0812">Transmembrane</keyword>
<keyword id="KW-1133">Transmembrane helix</keyword>
<proteinExistence type="inferred from homology"/>
<feature type="chain" id="PRO_0000250260" description="Undecaprenyl-diphosphatase">
    <location>
        <begin position="1"/>
        <end position="267"/>
    </location>
</feature>
<feature type="transmembrane region" description="Helical" evidence="1">
    <location>
        <begin position="1"/>
        <end position="21"/>
    </location>
</feature>
<feature type="transmembrane region" description="Helical" evidence="1">
    <location>
        <begin position="40"/>
        <end position="60"/>
    </location>
</feature>
<feature type="transmembrane region" description="Helical" evidence="1">
    <location>
        <begin position="83"/>
        <end position="103"/>
    </location>
</feature>
<feature type="transmembrane region" description="Helical" evidence="1">
    <location>
        <begin position="111"/>
        <end position="131"/>
    </location>
</feature>
<feature type="transmembrane region" description="Helical" evidence="1">
    <location>
        <begin position="144"/>
        <end position="164"/>
    </location>
</feature>
<feature type="transmembrane region" description="Helical" evidence="1">
    <location>
        <begin position="189"/>
        <end position="209"/>
    </location>
</feature>
<feature type="transmembrane region" description="Helical" evidence="1">
    <location>
        <begin position="219"/>
        <end position="239"/>
    </location>
</feature>
<feature type="transmembrane region" description="Helical" evidence="1">
    <location>
        <begin position="245"/>
        <end position="265"/>
    </location>
</feature>
<accession>Q16DZ2</accession>
<comment type="function">
    <text evidence="1">Catalyzes the dephosphorylation of undecaprenyl diphosphate (UPP). Confers resistance to bacitracin.</text>
</comment>
<comment type="catalytic activity">
    <reaction evidence="1">
        <text>di-trans,octa-cis-undecaprenyl diphosphate + H2O = di-trans,octa-cis-undecaprenyl phosphate + phosphate + H(+)</text>
        <dbReference type="Rhea" id="RHEA:28094"/>
        <dbReference type="ChEBI" id="CHEBI:15377"/>
        <dbReference type="ChEBI" id="CHEBI:15378"/>
        <dbReference type="ChEBI" id="CHEBI:43474"/>
        <dbReference type="ChEBI" id="CHEBI:58405"/>
        <dbReference type="ChEBI" id="CHEBI:60392"/>
        <dbReference type="EC" id="3.6.1.27"/>
    </reaction>
</comment>
<comment type="subcellular location">
    <subcellularLocation>
        <location evidence="1">Cell inner membrane</location>
        <topology evidence="1">Multi-pass membrane protein</topology>
    </subcellularLocation>
</comment>
<comment type="miscellaneous">
    <text>Bacitracin is thought to be involved in the inhibition of peptidoglycan synthesis by sequestering undecaprenyl diphosphate, thereby reducing the pool of lipid carrier available.</text>
</comment>
<comment type="similarity">
    <text evidence="1">Belongs to the UppP family.</text>
</comment>
<reference key="1">
    <citation type="journal article" date="2007" name="J. Bacteriol.">
        <title>The complete genome sequence of Roseobacter denitrificans reveals a mixotrophic rather than photosynthetic metabolism.</title>
        <authorList>
            <person name="Swingley W.D."/>
            <person name="Sadekar S."/>
            <person name="Mastrian S.D."/>
            <person name="Matthies H.J."/>
            <person name="Hao J."/>
            <person name="Ramos H."/>
            <person name="Acharya C.R."/>
            <person name="Conrad A.L."/>
            <person name="Taylor H.L."/>
            <person name="Dejesa L.C."/>
            <person name="Shah M.K."/>
            <person name="O'Huallachain M.E."/>
            <person name="Lince M.T."/>
            <person name="Blankenship R.E."/>
            <person name="Beatty J.T."/>
            <person name="Touchman J.W."/>
        </authorList>
    </citation>
    <scope>NUCLEOTIDE SEQUENCE [LARGE SCALE GENOMIC DNA]</scope>
    <source>
        <strain>ATCC 33942 / OCh 114</strain>
    </source>
</reference>
<sequence length="267" mass="28220">MTLFHLILVAAIQGLTEFLPVSSSGHLVLLPALTGQPDQGLAIDVAVHVGSLLAVILYFWSDVRIAATGSLRLARGKVDTQGAFLALCLIIATIPVMIAGLIIKLTGLDEMMRSVAVIGWTMLGFGLVLYWADRTGASTRTASGWTLKDAFLMGLAQILSLIPGTSRSGITITAARRLGYEREGAAKLAMLMSIPTIIASGAVLGADVIGEADWQMARDGALAAALAFVSALLALALMMRLLKSVSFTPYVVYRVILGLILLVYAYS</sequence>
<organism>
    <name type="scientific">Roseobacter denitrificans (strain ATCC 33942 / OCh 114)</name>
    <name type="common">Erythrobacter sp. (strain OCh 114)</name>
    <name type="synonym">Roseobacter denitrificans</name>
    <dbReference type="NCBI Taxonomy" id="375451"/>
    <lineage>
        <taxon>Bacteria</taxon>
        <taxon>Pseudomonadati</taxon>
        <taxon>Pseudomonadota</taxon>
        <taxon>Alphaproteobacteria</taxon>
        <taxon>Rhodobacterales</taxon>
        <taxon>Roseobacteraceae</taxon>
        <taxon>Roseobacter</taxon>
    </lineage>
</organism>